<organism>
    <name type="scientific">Yersinia pseudotuberculosis serotype O:1b (strain IP 31758)</name>
    <dbReference type="NCBI Taxonomy" id="349747"/>
    <lineage>
        <taxon>Bacteria</taxon>
        <taxon>Pseudomonadati</taxon>
        <taxon>Pseudomonadota</taxon>
        <taxon>Gammaproteobacteria</taxon>
        <taxon>Enterobacterales</taxon>
        <taxon>Yersiniaceae</taxon>
        <taxon>Yersinia</taxon>
    </lineage>
</organism>
<name>RNFA_YERP3</name>
<protein>
    <recommendedName>
        <fullName evidence="1">Ion-translocating oxidoreductase complex subunit A</fullName>
        <ecNumber evidence="1">7.-.-.-</ecNumber>
    </recommendedName>
    <alternativeName>
        <fullName evidence="1">Rnf electron transport complex subunit A</fullName>
    </alternativeName>
</protein>
<keyword id="KW-0997">Cell inner membrane</keyword>
<keyword id="KW-1003">Cell membrane</keyword>
<keyword id="KW-0249">Electron transport</keyword>
<keyword id="KW-0472">Membrane</keyword>
<keyword id="KW-1278">Translocase</keyword>
<keyword id="KW-0812">Transmembrane</keyword>
<keyword id="KW-1133">Transmembrane helix</keyword>
<keyword id="KW-0813">Transport</keyword>
<evidence type="ECO:0000255" key="1">
    <source>
        <dbReference type="HAMAP-Rule" id="MF_00459"/>
    </source>
</evidence>
<dbReference type="EC" id="7.-.-.-" evidence="1"/>
<dbReference type="EMBL" id="CP000720">
    <property type="protein sequence ID" value="ABS48584.1"/>
    <property type="molecule type" value="Genomic_DNA"/>
</dbReference>
<dbReference type="SMR" id="A7FHZ1"/>
<dbReference type="KEGG" id="ypi:YpsIP31758_1894"/>
<dbReference type="HOGENOM" id="CLU_095255_1_0_6"/>
<dbReference type="Proteomes" id="UP000002412">
    <property type="component" value="Chromosome"/>
</dbReference>
<dbReference type="GO" id="GO:0005886">
    <property type="term" value="C:plasma membrane"/>
    <property type="evidence" value="ECO:0007669"/>
    <property type="project" value="UniProtKB-SubCell"/>
</dbReference>
<dbReference type="GO" id="GO:0022900">
    <property type="term" value="P:electron transport chain"/>
    <property type="evidence" value="ECO:0007669"/>
    <property type="project" value="UniProtKB-UniRule"/>
</dbReference>
<dbReference type="HAMAP" id="MF_00459">
    <property type="entry name" value="RsxA_RnfA"/>
    <property type="match status" value="1"/>
</dbReference>
<dbReference type="InterPro" id="IPR011293">
    <property type="entry name" value="Ion_transpt_RnfA/RsxA"/>
</dbReference>
<dbReference type="InterPro" id="IPR003667">
    <property type="entry name" value="NqrDE/RnfAE"/>
</dbReference>
<dbReference type="InterPro" id="IPR050133">
    <property type="entry name" value="NqrDE/RnfAE_oxidrdctase"/>
</dbReference>
<dbReference type="NCBIfam" id="NF003481">
    <property type="entry name" value="PRK05151.1"/>
    <property type="match status" value="1"/>
</dbReference>
<dbReference type="NCBIfam" id="TIGR01943">
    <property type="entry name" value="rnfA"/>
    <property type="match status" value="1"/>
</dbReference>
<dbReference type="PANTHER" id="PTHR30335">
    <property type="entry name" value="INTEGRAL MEMBRANE PROTEIN OF SOXR-REDUCING COMPLEX"/>
    <property type="match status" value="1"/>
</dbReference>
<dbReference type="PANTHER" id="PTHR30335:SF0">
    <property type="entry name" value="ION-TRANSLOCATING OXIDOREDUCTASE COMPLEX SUBUNIT A"/>
    <property type="match status" value="1"/>
</dbReference>
<dbReference type="Pfam" id="PF02508">
    <property type="entry name" value="Rnf-Nqr"/>
    <property type="match status" value="1"/>
</dbReference>
<dbReference type="PIRSF" id="PIRSF006102">
    <property type="entry name" value="NQR_DE"/>
    <property type="match status" value="1"/>
</dbReference>
<accession>A7FHZ1</accession>
<reference key="1">
    <citation type="journal article" date="2007" name="PLoS Genet.">
        <title>The complete genome sequence of Yersinia pseudotuberculosis IP31758, the causative agent of Far East scarlet-like fever.</title>
        <authorList>
            <person name="Eppinger M."/>
            <person name="Rosovitz M.J."/>
            <person name="Fricke W.F."/>
            <person name="Rasko D.A."/>
            <person name="Kokorina G."/>
            <person name="Fayolle C."/>
            <person name="Lindler L.E."/>
            <person name="Carniel E."/>
            <person name="Ravel J."/>
        </authorList>
    </citation>
    <scope>NUCLEOTIDE SEQUENCE [LARGE SCALE GENOMIC DNA]</scope>
    <source>
        <strain>IP 31758</strain>
    </source>
</reference>
<comment type="function">
    <text evidence="1">Part of a membrane-bound complex that couples electron transfer with translocation of ions across the membrane.</text>
</comment>
<comment type="subunit">
    <text evidence="1">The complex is composed of six subunits: RnfA, RnfB, RnfC, RnfD, RnfE and RnfG.</text>
</comment>
<comment type="subcellular location">
    <subcellularLocation>
        <location evidence="1">Cell inner membrane</location>
        <topology evidence="1">Multi-pass membrane protein</topology>
    </subcellularLocation>
</comment>
<comment type="similarity">
    <text evidence="1">Belongs to the NqrDE/RnfAE family.</text>
</comment>
<gene>
    <name evidence="1" type="primary">rnfA</name>
    <name type="ordered locus">YpsIP31758_1894</name>
</gene>
<proteinExistence type="inferred from homology"/>
<feature type="chain" id="PRO_1000060331" description="Ion-translocating oxidoreductase complex subunit A">
    <location>
        <begin position="1"/>
        <end position="193"/>
    </location>
</feature>
<feature type="transmembrane region" description="Helical" evidence="1">
    <location>
        <begin position="5"/>
        <end position="25"/>
    </location>
</feature>
<feature type="transmembrane region" description="Helical" evidence="1">
    <location>
        <begin position="39"/>
        <end position="59"/>
    </location>
</feature>
<feature type="transmembrane region" description="Helical" evidence="1">
    <location>
        <begin position="62"/>
        <end position="82"/>
    </location>
</feature>
<feature type="transmembrane region" description="Helical" evidence="1">
    <location>
        <begin position="102"/>
        <end position="122"/>
    </location>
</feature>
<feature type="transmembrane region" description="Helical" evidence="1">
    <location>
        <begin position="134"/>
        <end position="154"/>
    </location>
</feature>
<feature type="transmembrane region" description="Helical" evidence="1">
    <location>
        <begin position="171"/>
        <end position="191"/>
    </location>
</feature>
<sequence length="193" mass="20782">MTEYLLLFVGTVLVNNFVLVKFLGLCPFMGVSKKLETAIGMGLATTFVLTLASVCAWMVNSFILLPLGLIYLRTLAFILVIAVVVQFTELVVRKTSPTLYRLLGIFLPLITTNCAVLGVALLNVNQSHNFMQSAVYGFSAAAGFSLVMVLFAAIRERLAVADVPAPFRGSSIALITAGLMSLAFMGFTGLVKF</sequence>